<evidence type="ECO:0000255" key="1">
    <source>
        <dbReference type="HAMAP-Rule" id="MF_00102"/>
    </source>
</evidence>
<evidence type="ECO:0000305" key="2"/>
<evidence type="ECO:0007829" key="3">
    <source>
        <dbReference type="PDB" id="5UGJ"/>
    </source>
</evidence>
<organism>
    <name type="scientific">Neisseria meningitidis serogroup B (strain ATCC BAA-335 / MC58)</name>
    <dbReference type="NCBI Taxonomy" id="122586"/>
    <lineage>
        <taxon>Bacteria</taxon>
        <taxon>Pseudomonadati</taxon>
        <taxon>Pseudomonadota</taxon>
        <taxon>Betaproteobacteria</taxon>
        <taxon>Neisseriales</taxon>
        <taxon>Neisseriaceae</taxon>
        <taxon>Neisseria</taxon>
    </lineage>
</organism>
<protein>
    <recommendedName>
        <fullName evidence="1">4-hydroxy-tetrahydrodipicolinate reductase</fullName>
        <shortName evidence="1">HTPA reductase</shortName>
        <ecNumber evidence="1">1.17.1.8</ecNumber>
    </recommendedName>
</protein>
<dbReference type="EC" id="1.17.1.8" evidence="1"/>
<dbReference type="EMBL" id="AE002098">
    <property type="protein sequence ID" value="AAF40660.1"/>
    <property type="molecule type" value="Genomic_DNA"/>
</dbReference>
<dbReference type="PIR" id="E81226">
    <property type="entry name" value="E81226"/>
</dbReference>
<dbReference type="RefSeq" id="NP_273261.1">
    <property type="nucleotide sequence ID" value="NC_003112.2"/>
</dbReference>
<dbReference type="RefSeq" id="WP_002236618.1">
    <property type="nucleotide sequence ID" value="NC_003112.2"/>
</dbReference>
<dbReference type="PDB" id="5UGJ">
    <property type="method" value="X-ray"/>
    <property type="resolution" value="2.70 A"/>
    <property type="chains" value="A/B/C/D=1-269"/>
</dbReference>
<dbReference type="PDBsum" id="5UGJ"/>
<dbReference type="SMR" id="Q9K1F1"/>
<dbReference type="FunCoup" id="Q9K1F1">
    <property type="interactions" value="479"/>
</dbReference>
<dbReference type="STRING" id="122586.NMB0203"/>
<dbReference type="PaxDb" id="122586-NMB0203"/>
<dbReference type="KEGG" id="nme:NMB0203"/>
<dbReference type="PATRIC" id="fig|122586.8.peg.252"/>
<dbReference type="HOGENOM" id="CLU_047479_2_1_4"/>
<dbReference type="InParanoid" id="Q9K1F1"/>
<dbReference type="OrthoDB" id="9790352at2"/>
<dbReference type="BRENDA" id="1.17.1.8">
    <property type="organism ID" value="3593"/>
</dbReference>
<dbReference type="UniPathway" id="UPA00034">
    <property type="reaction ID" value="UER00018"/>
</dbReference>
<dbReference type="Proteomes" id="UP000000425">
    <property type="component" value="Chromosome"/>
</dbReference>
<dbReference type="GO" id="GO:0005829">
    <property type="term" value="C:cytosol"/>
    <property type="evidence" value="ECO:0000318"/>
    <property type="project" value="GO_Central"/>
</dbReference>
<dbReference type="GO" id="GO:0008839">
    <property type="term" value="F:4-hydroxy-tetrahydrodipicolinate reductase"/>
    <property type="evidence" value="ECO:0000318"/>
    <property type="project" value="GO_Central"/>
</dbReference>
<dbReference type="GO" id="GO:0051287">
    <property type="term" value="F:NAD binding"/>
    <property type="evidence" value="ECO:0007669"/>
    <property type="project" value="UniProtKB-UniRule"/>
</dbReference>
<dbReference type="GO" id="GO:0050661">
    <property type="term" value="F:NADP binding"/>
    <property type="evidence" value="ECO:0007669"/>
    <property type="project" value="UniProtKB-UniRule"/>
</dbReference>
<dbReference type="GO" id="GO:0016726">
    <property type="term" value="F:oxidoreductase activity, acting on CH or CH2 groups, NAD or NADP as acceptor"/>
    <property type="evidence" value="ECO:0007669"/>
    <property type="project" value="UniProtKB-UniRule"/>
</dbReference>
<dbReference type="GO" id="GO:0019877">
    <property type="term" value="P:diaminopimelate biosynthetic process"/>
    <property type="evidence" value="ECO:0000318"/>
    <property type="project" value="GO_Central"/>
</dbReference>
<dbReference type="GO" id="GO:0009089">
    <property type="term" value="P:lysine biosynthetic process via diaminopimelate"/>
    <property type="evidence" value="ECO:0007669"/>
    <property type="project" value="UniProtKB-UniRule"/>
</dbReference>
<dbReference type="CDD" id="cd02274">
    <property type="entry name" value="DHDPR_N"/>
    <property type="match status" value="1"/>
</dbReference>
<dbReference type="FunFam" id="3.30.360.10:FF:000004">
    <property type="entry name" value="4-hydroxy-tetrahydrodipicolinate reductase"/>
    <property type="match status" value="1"/>
</dbReference>
<dbReference type="FunFam" id="3.40.50.720:FF:000048">
    <property type="entry name" value="4-hydroxy-tetrahydrodipicolinate reductase"/>
    <property type="match status" value="1"/>
</dbReference>
<dbReference type="Gene3D" id="3.30.360.10">
    <property type="entry name" value="Dihydrodipicolinate Reductase, domain 2"/>
    <property type="match status" value="1"/>
</dbReference>
<dbReference type="Gene3D" id="3.40.50.720">
    <property type="entry name" value="NAD(P)-binding Rossmann-like Domain"/>
    <property type="match status" value="1"/>
</dbReference>
<dbReference type="HAMAP" id="MF_00102">
    <property type="entry name" value="DapB"/>
    <property type="match status" value="1"/>
</dbReference>
<dbReference type="InterPro" id="IPR022663">
    <property type="entry name" value="DapB_C"/>
</dbReference>
<dbReference type="InterPro" id="IPR000846">
    <property type="entry name" value="DapB_N"/>
</dbReference>
<dbReference type="InterPro" id="IPR022664">
    <property type="entry name" value="DapB_N_CS"/>
</dbReference>
<dbReference type="InterPro" id="IPR023940">
    <property type="entry name" value="DHDPR_bac"/>
</dbReference>
<dbReference type="InterPro" id="IPR036291">
    <property type="entry name" value="NAD(P)-bd_dom_sf"/>
</dbReference>
<dbReference type="NCBIfam" id="TIGR00036">
    <property type="entry name" value="dapB"/>
    <property type="match status" value="1"/>
</dbReference>
<dbReference type="PANTHER" id="PTHR20836:SF0">
    <property type="entry name" value="4-HYDROXY-TETRAHYDRODIPICOLINATE REDUCTASE 1, CHLOROPLASTIC-RELATED"/>
    <property type="match status" value="1"/>
</dbReference>
<dbReference type="PANTHER" id="PTHR20836">
    <property type="entry name" value="DIHYDRODIPICOLINATE REDUCTASE"/>
    <property type="match status" value="1"/>
</dbReference>
<dbReference type="Pfam" id="PF05173">
    <property type="entry name" value="DapB_C"/>
    <property type="match status" value="1"/>
</dbReference>
<dbReference type="Pfam" id="PF01113">
    <property type="entry name" value="DapB_N"/>
    <property type="match status" value="1"/>
</dbReference>
<dbReference type="PIRSF" id="PIRSF000161">
    <property type="entry name" value="DHPR"/>
    <property type="match status" value="1"/>
</dbReference>
<dbReference type="SUPFAM" id="SSF55347">
    <property type="entry name" value="Glyceraldehyde-3-phosphate dehydrogenase-like, C-terminal domain"/>
    <property type="match status" value="1"/>
</dbReference>
<dbReference type="SUPFAM" id="SSF51735">
    <property type="entry name" value="NAD(P)-binding Rossmann-fold domains"/>
    <property type="match status" value="1"/>
</dbReference>
<dbReference type="PROSITE" id="PS01298">
    <property type="entry name" value="DAPB"/>
    <property type="match status" value="1"/>
</dbReference>
<sequence>MTPLKIAIAGANGRMGRVLVEAVNNHPDTVLSGALEHSGSEALGLDAGYAVGLKTGIAISDDVDAVLAQSDVLIDFTRPEPTLKHLQKCVEKQVNIIIGTTGFDDTGKAAIHTAAEKTGIVFAANFSVGVNLTFHILDTVARVLNEGYDIEIIEGHHRHKVDAPSGTALRMGEVIAGALGRDLKQCAVYGREGHTGPRDPSTIGFATVRAGDIVGDHTALFATDGERVEITHKASSRMTFAAGAVRAAVWVNGKTGLYDMQDVLGLNNR</sequence>
<gene>
    <name evidence="1" type="primary">dapB</name>
    <name type="ordered locus">NMB0203</name>
</gene>
<accession>Q9K1F1</accession>
<proteinExistence type="evidence at protein level"/>
<feature type="chain" id="PRO_0000141460" description="4-hydroxy-tetrahydrodipicolinate reductase">
    <location>
        <begin position="1"/>
        <end position="269"/>
    </location>
</feature>
<feature type="active site" description="Proton donor/acceptor" evidence="1">
    <location>
        <position position="156"/>
    </location>
</feature>
<feature type="active site" description="Proton donor" evidence="1">
    <location>
        <position position="160"/>
    </location>
</feature>
<feature type="binding site" evidence="1">
    <location>
        <begin position="10"/>
        <end position="15"/>
    </location>
    <ligand>
        <name>NAD(+)</name>
        <dbReference type="ChEBI" id="CHEBI:57540"/>
    </ligand>
</feature>
<feature type="binding site" evidence="1">
    <location>
        <position position="36"/>
    </location>
    <ligand>
        <name>NAD(+)</name>
        <dbReference type="ChEBI" id="CHEBI:57540"/>
    </ligand>
</feature>
<feature type="binding site" evidence="1">
    <location>
        <begin position="99"/>
        <end position="101"/>
    </location>
    <ligand>
        <name>NAD(+)</name>
        <dbReference type="ChEBI" id="CHEBI:57540"/>
    </ligand>
</feature>
<feature type="binding site" evidence="1">
    <location>
        <begin position="123"/>
        <end position="126"/>
    </location>
    <ligand>
        <name>NAD(+)</name>
        <dbReference type="ChEBI" id="CHEBI:57540"/>
    </ligand>
</feature>
<feature type="binding site" evidence="1">
    <location>
        <position position="157"/>
    </location>
    <ligand>
        <name>(S)-2,3,4,5-tetrahydrodipicolinate</name>
        <dbReference type="ChEBI" id="CHEBI:16845"/>
    </ligand>
</feature>
<feature type="binding site" evidence="1">
    <location>
        <begin position="166"/>
        <end position="167"/>
    </location>
    <ligand>
        <name>(S)-2,3,4,5-tetrahydrodipicolinate</name>
        <dbReference type="ChEBI" id="CHEBI:16845"/>
    </ligand>
</feature>
<feature type="strand" evidence="3">
    <location>
        <begin position="5"/>
        <end position="10"/>
    </location>
</feature>
<feature type="helix" evidence="3">
    <location>
        <begin position="14"/>
        <end position="25"/>
    </location>
</feature>
<feature type="strand" evidence="3">
    <location>
        <begin position="30"/>
        <end position="35"/>
    </location>
</feature>
<feature type="strand" evidence="3">
    <location>
        <begin position="43"/>
        <end position="46"/>
    </location>
</feature>
<feature type="helix" evidence="3">
    <location>
        <begin position="47"/>
        <end position="49"/>
    </location>
</feature>
<feature type="turn" evidence="3">
    <location>
        <begin position="50"/>
        <end position="52"/>
    </location>
</feature>
<feature type="strand" evidence="3">
    <location>
        <begin position="56"/>
        <end position="58"/>
    </location>
</feature>
<feature type="helix" evidence="3">
    <location>
        <begin position="63"/>
        <end position="67"/>
    </location>
</feature>
<feature type="strand" evidence="3">
    <location>
        <begin position="71"/>
        <end position="75"/>
    </location>
</feature>
<feature type="helix" evidence="3">
    <location>
        <begin position="79"/>
        <end position="91"/>
    </location>
</feature>
<feature type="strand" evidence="3">
    <location>
        <begin position="95"/>
        <end position="98"/>
    </location>
</feature>
<feature type="helix" evidence="3">
    <location>
        <begin position="105"/>
        <end position="114"/>
    </location>
</feature>
<feature type="turn" evidence="3">
    <location>
        <begin position="115"/>
        <end position="117"/>
    </location>
</feature>
<feature type="strand" evidence="3">
    <location>
        <begin position="118"/>
        <end position="122"/>
    </location>
</feature>
<feature type="helix" evidence="3">
    <location>
        <begin position="128"/>
        <end position="143"/>
    </location>
</feature>
<feature type="strand" evidence="3">
    <location>
        <begin position="149"/>
        <end position="156"/>
    </location>
</feature>
<feature type="strand" evidence="3">
    <location>
        <begin position="162"/>
        <end position="164"/>
    </location>
</feature>
<feature type="helix" evidence="3">
    <location>
        <begin position="166"/>
        <end position="178"/>
    </location>
</feature>
<feature type="helix" evidence="3">
    <location>
        <begin position="183"/>
        <end position="186"/>
    </location>
</feature>
<feature type="strand" evidence="3">
    <location>
        <begin position="203"/>
        <end position="209"/>
    </location>
</feature>
<feature type="strand" evidence="3">
    <location>
        <begin position="215"/>
        <end position="223"/>
    </location>
</feature>
<feature type="strand" evidence="3">
    <location>
        <begin position="226"/>
        <end position="234"/>
    </location>
</feature>
<feature type="helix" evidence="3">
    <location>
        <begin position="238"/>
        <end position="250"/>
    </location>
</feature>
<feature type="strand" evidence="3">
    <location>
        <begin position="256"/>
        <end position="258"/>
    </location>
</feature>
<feature type="helix" evidence="3">
    <location>
        <begin position="260"/>
        <end position="264"/>
    </location>
</feature>
<comment type="function">
    <text evidence="1">Catalyzes the conversion of 4-hydroxy-tetrahydrodipicolinate (HTPA) to tetrahydrodipicolinate.</text>
</comment>
<comment type="catalytic activity">
    <reaction evidence="1">
        <text>(S)-2,3,4,5-tetrahydrodipicolinate + NAD(+) + H2O = (2S,4S)-4-hydroxy-2,3,4,5-tetrahydrodipicolinate + NADH + H(+)</text>
        <dbReference type="Rhea" id="RHEA:35323"/>
        <dbReference type="ChEBI" id="CHEBI:15377"/>
        <dbReference type="ChEBI" id="CHEBI:15378"/>
        <dbReference type="ChEBI" id="CHEBI:16845"/>
        <dbReference type="ChEBI" id="CHEBI:57540"/>
        <dbReference type="ChEBI" id="CHEBI:57945"/>
        <dbReference type="ChEBI" id="CHEBI:67139"/>
        <dbReference type="EC" id="1.17.1.8"/>
    </reaction>
</comment>
<comment type="catalytic activity">
    <reaction evidence="1">
        <text>(S)-2,3,4,5-tetrahydrodipicolinate + NADP(+) + H2O = (2S,4S)-4-hydroxy-2,3,4,5-tetrahydrodipicolinate + NADPH + H(+)</text>
        <dbReference type="Rhea" id="RHEA:35331"/>
        <dbReference type="ChEBI" id="CHEBI:15377"/>
        <dbReference type="ChEBI" id="CHEBI:15378"/>
        <dbReference type="ChEBI" id="CHEBI:16845"/>
        <dbReference type="ChEBI" id="CHEBI:57783"/>
        <dbReference type="ChEBI" id="CHEBI:58349"/>
        <dbReference type="ChEBI" id="CHEBI:67139"/>
        <dbReference type="EC" id="1.17.1.8"/>
    </reaction>
</comment>
<comment type="pathway">
    <text evidence="1">Amino-acid biosynthesis; L-lysine biosynthesis via DAP pathway; (S)-tetrahydrodipicolinate from L-aspartate: step 4/4.</text>
</comment>
<comment type="subcellular location">
    <subcellularLocation>
        <location evidence="1">Cytoplasm</location>
    </subcellularLocation>
</comment>
<comment type="similarity">
    <text evidence="1">Belongs to the DapB family.</text>
</comment>
<comment type="caution">
    <text evidence="2">Was originally thought to be a dihydrodipicolinate reductase (DHDPR), catalyzing the conversion of dihydrodipicolinate to tetrahydrodipicolinate. However, it was shown in E.coli that the substrate of the enzymatic reaction is not dihydrodipicolinate (DHDP) but in fact (2S,4S)-4-hydroxy-2,3,4,5-tetrahydrodipicolinic acid (HTPA), the product released by the DapA-catalyzed reaction.</text>
</comment>
<keyword id="KW-0002">3D-structure</keyword>
<keyword id="KW-0028">Amino-acid biosynthesis</keyword>
<keyword id="KW-0963">Cytoplasm</keyword>
<keyword id="KW-0220">Diaminopimelate biosynthesis</keyword>
<keyword id="KW-0457">Lysine biosynthesis</keyword>
<keyword id="KW-0520">NAD</keyword>
<keyword id="KW-0521">NADP</keyword>
<keyword id="KW-0560">Oxidoreductase</keyword>
<keyword id="KW-1185">Reference proteome</keyword>
<reference key="1">
    <citation type="journal article" date="2000" name="Science">
        <title>Complete genome sequence of Neisseria meningitidis serogroup B strain MC58.</title>
        <authorList>
            <person name="Tettelin H."/>
            <person name="Saunders N.J."/>
            <person name="Heidelberg J.F."/>
            <person name="Jeffries A.C."/>
            <person name="Nelson K.E."/>
            <person name="Eisen J.A."/>
            <person name="Ketchum K.A."/>
            <person name="Hood D.W."/>
            <person name="Peden J.F."/>
            <person name="Dodson R.J."/>
            <person name="Nelson W.C."/>
            <person name="Gwinn M.L."/>
            <person name="DeBoy R.T."/>
            <person name="Peterson J.D."/>
            <person name="Hickey E.K."/>
            <person name="Haft D.H."/>
            <person name="Salzberg S.L."/>
            <person name="White O."/>
            <person name="Fleischmann R.D."/>
            <person name="Dougherty B.A."/>
            <person name="Mason T.M."/>
            <person name="Ciecko A."/>
            <person name="Parksey D.S."/>
            <person name="Blair E."/>
            <person name="Cittone H."/>
            <person name="Clark E.B."/>
            <person name="Cotton M.D."/>
            <person name="Utterback T.R."/>
            <person name="Khouri H.M."/>
            <person name="Qin H."/>
            <person name="Vamathevan J.J."/>
            <person name="Gill J."/>
            <person name="Scarlato V."/>
            <person name="Masignani V."/>
            <person name="Pizza M."/>
            <person name="Grandi G."/>
            <person name="Sun L."/>
            <person name="Smith H.O."/>
            <person name="Fraser C.M."/>
            <person name="Moxon E.R."/>
            <person name="Rappuoli R."/>
            <person name="Venter J.C."/>
        </authorList>
    </citation>
    <scope>NUCLEOTIDE SEQUENCE [LARGE SCALE GENOMIC DNA]</scope>
    <source>
        <strain>ATCC BAA-335 / MC58</strain>
    </source>
</reference>
<name>DAPB_NEIMB</name>